<sequence>MTEEKIQSYRKKIYVIRQKLKAKKPRFLRYDSDKFFRLGRQEKWRRPYGRDNKTRLKVRGFPAIVSVGYRLPKEVRGFHPSGLRQVIVHNVNDLVKVQNQKDSVIVTIASSVGFKKRLEILNKARELGLKVSNEGVSA</sequence>
<reference key="1">
    <citation type="journal article" date="2009" name="Proc. Natl. Acad. Sci. U.S.A.">
        <title>Biogeography of the Sulfolobus islandicus pan-genome.</title>
        <authorList>
            <person name="Reno M.L."/>
            <person name="Held N.L."/>
            <person name="Fields C.J."/>
            <person name="Burke P.V."/>
            <person name="Whitaker R.J."/>
        </authorList>
    </citation>
    <scope>NUCLEOTIDE SEQUENCE [LARGE SCALE GENOMIC DNA]</scope>
    <source>
        <strain>M.16.4 / Kamchatka #3</strain>
    </source>
</reference>
<proteinExistence type="inferred from homology"/>
<comment type="similarity">
    <text evidence="1">Belongs to the eukaryotic ribosomal protein eL32 family.</text>
</comment>
<keyword id="KW-0687">Ribonucleoprotein</keyword>
<keyword id="KW-0689">Ribosomal protein</keyword>
<dbReference type="EMBL" id="CP001402">
    <property type="protein sequence ID" value="ACR42037.1"/>
    <property type="molecule type" value="Genomic_DNA"/>
</dbReference>
<dbReference type="RefSeq" id="WP_012711435.1">
    <property type="nucleotide sequence ID" value="NC_012726.1"/>
</dbReference>
<dbReference type="SMR" id="C4KHH3"/>
<dbReference type="KEGG" id="sid:M164_1431"/>
<dbReference type="HOGENOM" id="CLU_071479_3_0_2"/>
<dbReference type="Proteomes" id="UP000001479">
    <property type="component" value="Chromosome"/>
</dbReference>
<dbReference type="GO" id="GO:0022625">
    <property type="term" value="C:cytosolic large ribosomal subunit"/>
    <property type="evidence" value="ECO:0007669"/>
    <property type="project" value="TreeGrafter"/>
</dbReference>
<dbReference type="GO" id="GO:0003735">
    <property type="term" value="F:structural constituent of ribosome"/>
    <property type="evidence" value="ECO:0007669"/>
    <property type="project" value="InterPro"/>
</dbReference>
<dbReference type="GO" id="GO:0006412">
    <property type="term" value="P:translation"/>
    <property type="evidence" value="ECO:0007669"/>
    <property type="project" value="UniProtKB-UniRule"/>
</dbReference>
<dbReference type="CDD" id="cd00513">
    <property type="entry name" value="Ribosomal_L32_L32e"/>
    <property type="match status" value="1"/>
</dbReference>
<dbReference type="HAMAP" id="MF_00810">
    <property type="entry name" value="Ribosomal_eL32"/>
    <property type="match status" value="1"/>
</dbReference>
<dbReference type="InterPro" id="IPR001515">
    <property type="entry name" value="Ribosomal_eL32"/>
</dbReference>
<dbReference type="InterPro" id="IPR023654">
    <property type="entry name" value="Ribosomal_eL32_arc"/>
</dbReference>
<dbReference type="InterPro" id="IPR018263">
    <property type="entry name" value="Ribosomal_eL32_CS"/>
</dbReference>
<dbReference type="InterPro" id="IPR036351">
    <property type="entry name" value="Ribosomal_eL32_sf"/>
</dbReference>
<dbReference type="NCBIfam" id="NF006332">
    <property type="entry name" value="PRK08562.1"/>
    <property type="match status" value="1"/>
</dbReference>
<dbReference type="PANTHER" id="PTHR23413">
    <property type="entry name" value="60S RIBOSOMAL PROTEIN L32 AND DNA-DIRECTED RNA POLYMERASE II, SUBUNIT N"/>
    <property type="match status" value="1"/>
</dbReference>
<dbReference type="PANTHER" id="PTHR23413:SF1">
    <property type="entry name" value="RIBOSOMAL PROTEIN L32"/>
    <property type="match status" value="1"/>
</dbReference>
<dbReference type="Pfam" id="PF01655">
    <property type="entry name" value="Ribosomal_L32e"/>
    <property type="match status" value="1"/>
</dbReference>
<dbReference type="SMART" id="SM01393">
    <property type="entry name" value="Ribosomal_L32e"/>
    <property type="match status" value="1"/>
</dbReference>
<dbReference type="SUPFAM" id="SSF52042">
    <property type="entry name" value="Ribosomal protein L32e"/>
    <property type="match status" value="1"/>
</dbReference>
<dbReference type="PROSITE" id="PS00580">
    <property type="entry name" value="RIBOSOMAL_L32E"/>
    <property type="match status" value="1"/>
</dbReference>
<accession>C4KHH3</accession>
<evidence type="ECO:0000255" key="1">
    <source>
        <dbReference type="HAMAP-Rule" id="MF_00810"/>
    </source>
</evidence>
<evidence type="ECO:0000305" key="2"/>
<organism>
    <name type="scientific">Saccharolobus islandicus (strain M.16.4 / Kamchatka #3)</name>
    <name type="common">Sulfolobus islandicus</name>
    <dbReference type="NCBI Taxonomy" id="426118"/>
    <lineage>
        <taxon>Archaea</taxon>
        <taxon>Thermoproteota</taxon>
        <taxon>Thermoprotei</taxon>
        <taxon>Sulfolobales</taxon>
        <taxon>Sulfolobaceae</taxon>
        <taxon>Saccharolobus</taxon>
    </lineage>
</organism>
<feature type="chain" id="PRO_1000213011" description="Large ribosomal subunit protein eL32">
    <location>
        <begin position="1"/>
        <end position="138"/>
    </location>
</feature>
<gene>
    <name evidence="1" type="primary">rpl32e</name>
    <name type="ordered locus">M164_1431</name>
</gene>
<protein>
    <recommendedName>
        <fullName evidence="1">Large ribosomal subunit protein eL32</fullName>
    </recommendedName>
    <alternativeName>
        <fullName evidence="2">50S ribosomal protein L32e</fullName>
    </alternativeName>
</protein>
<name>RL32_SACI6</name>